<reference key="1">
    <citation type="journal article" date="1991" name="EMBO J.">
        <title>Isolation and characterization of cDNA clones for plant cyclins.</title>
        <authorList>
            <person name="Hata S."/>
            <person name="Kouchi H."/>
            <person name="Suzuka I."/>
            <person name="Ishii T."/>
        </authorList>
    </citation>
    <scope>NUCLEOTIDE SEQUENCE [MRNA]</scope>
    <source>
        <strain>cv. Akisengoku</strain>
        <tissue>Root</tissue>
    </source>
</reference>
<evidence type="ECO:0000305" key="1"/>
<accession>P25012</accession>
<sequence length="257" mass="29376">DIYKFYKLVENESHPHDYIDSQPEINERMRAILVDWLIDVHTKFELSLETLYLTINIIDRFLAVKTVPRRELQLVGISAMLMASKYEEIWPPEVNDFVCLSDRAYTHEQILAMEKTILNKLEWTLTVPTPFVFLVRFIKAAVPDQELENMAHFMSELGMMNYATLMYCPSMVAASAVFAARCTLNKAPLWNETLKLHTGYSQEQLMDCARLLVGFHSTLGNGKLRVVYRKYSDPQKGAVAVLPPAKLLSEGSASQHS</sequence>
<name>CCNB2_SOYBN</name>
<proteinExistence type="evidence at transcript level"/>
<comment type="function">
    <text>Essential for the control of the cell cycle at the G2/M (mitosis) transition.</text>
</comment>
<comment type="subunit">
    <text>Interacts with the CDC2 protein kinase to form a serine/threonine kinase holoenzyme complex also known as maturation promoting factor (MPF). The cyclin subunit imparts substrate specificity to the complex.</text>
</comment>
<comment type="developmental stage">
    <text>Accumulates steadily during G2 and is abruptly destroyed at mitosis.</text>
</comment>
<comment type="similarity">
    <text evidence="1">Belongs to the cyclin family. Cyclin AB subfamily.</text>
</comment>
<protein>
    <recommendedName>
        <fullName>G2/mitotic-specific cyclin S13-7</fullName>
    </recommendedName>
    <alternativeName>
        <fullName>B-like cyclin</fullName>
    </alternativeName>
</protein>
<feature type="chain" id="PRO_0000080398" description="G2/mitotic-specific cyclin S13-7">
    <location>
        <begin position="1" status="less than"/>
        <end position="257"/>
    </location>
</feature>
<feature type="non-terminal residue">
    <location>
        <position position="1"/>
    </location>
</feature>
<keyword id="KW-0131">Cell cycle</keyword>
<keyword id="KW-0132">Cell division</keyword>
<keyword id="KW-0195">Cyclin</keyword>
<keyword id="KW-0498">Mitosis</keyword>
<keyword id="KW-1185">Reference proteome</keyword>
<organism>
    <name type="scientific">Glycine max</name>
    <name type="common">Soybean</name>
    <name type="synonym">Glycine hispida</name>
    <dbReference type="NCBI Taxonomy" id="3847"/>
    <lineage>
        <taxon>Eukaryota</taxon>
        <taxon>Viridiplantae</taxon>
        <taxon>Streptophyta</taxon>
        <taxon>Embryophyta</taxon>
        <taxon>Tracheophyta</taxon>
        <taxon>Spermatophyta</taxon>
        <taxon>Magnoliopsida</taxon>
        <taxon>eudicotyledons</taxon>
        <taxon>Gunneridae</taxon>
        <taxon>Pentapetalae</taxon>
        <taxon>rosids</taxon>
        <taxon>fabids</taxon>
        <taxon>Fabales</taxon>
        <taxon>Fabaceae</taxon>
        <taxon>Papilionoideae</taxon>
        <taxon>50 kb inversion clade</taxon>
        <taxon>NPAAA clade</taxon>
        <taxon>indigoferoid/millettioid clade</taxon>
        <taxon>Phaseoleae</taxon>
        <taxon>Glycine</taxon>
        <taxon>Glycine subgen. Soja</taxon>
    </lineage>
</organism>
<dbReference type="EMBL" id="X62303">
    <property type="protein sequence ID" value="CAA44188.1"/>
    <property type="molecule type" value="mRNA"/>
</dbReference>
<dbReference type="PIR" id="S74672">
    <property type="entry name" value="S74672"/>
</dbReference>
<dbReference type="SMR" id="P25012"/>
<dbReference type="FunCoup" id="P25012">
    <property type="interactions" value="2558"/>
</dbReference>
<dbReference type="STRING" id="3847.P25012"/>
<dbReference type="InParanoid" id="P25012"/>
<dbReference type="Proteomes" id="UP000008827">
    <property type="component" value="Unplaced"/>
</dbReference>
<dbReference type="GO" id="GO:0000307">
    <property type="term" value="C:cyclin-dependent protein kinase holoenzyme complex"/>
    <property type="evidence" value="ECO:0000318"/>
    <property type="project" value="GO_Central"/>
</dbReference>
<dbReference type="GO" id="GO:0005737">
    <property type="term" value="C:cytoplasm"/>
    <property type="evidence" value="ECO:0000318"/>
    <property type="project" value="GO_Central"/>
</dbReference>
<dbReference type="GO" id="GO:0005634">
    <property type="term" value="C:nucleus"/>
    <property type="evidence" value="ECO:0000318"/>
    <property type="project" value="GO_Central"/>
</dbReference>
<dbReference type="GO" id="GO:0016538">
    <property type="term" value="F:cyclin-dependent protein serine/threonine kinase regulator activity"/>
    <property type="evidence" value="ECO:0000318"/>
    <property type="project" value="GO_Central"/>
</dbReference>
<dbReference type="GO" id="GO:0051301">
    <property type="term" value="P:cell division"/>
    <property type="evidence" value="ECO:0007669"/>
    <property type="project" value="UniProtKB-KW"/>
</dbReference>
<dbReference type="GO" id="GO:0000082">
    <property type="term" value="P:G1/S transition of mitotic cell cycle"/>
    <property type="evidence" value="ECO:0000318"/>
    <property type="project" value="GO_Central"/>
</dbReference>
<dbReference type="CDD" id="cd20511">
    <property type="entry name" value="CYCLIN_AtCycB-like_rpt2"/>
    <property type="match status" value="1"/>
</dbReference>
<dbReference type="FunFam" id="1.10.472.10:FF:000032">
    <property type="entry name" value="G2/mitotic-specific cyclin-1"/>
    <property type="match status" value="1"/>
</dbReference>
<dbReference type="Gene3D" id="1.10.472.10">
    <property type="entry name" value="Cyclin-like"/>
    <property type="match status" value="2"/>
</dbReference>
<dbReference type="InterPro" id="IPR039361">
    <property type="entry name" value="Cyclin"/>
</dbReference>
<dbReference type="InterPro" id="IPR013763">
    <property type="entry name" value="Cyclin-like_dom"/>
</dbReference>
<dbReference type="InterPro" id="IPR036915">
    <property type="entry name" value="Cyclin-like_sf"/>
</dbReference>
<dbReference type="InterPro" id="IPR046965">
    <property type="entry name" value="Cyclin_A/B-like"/>
</dbReference>
<dbReference type="InterPro" id="IPR004367">
    <property type="entry name" value="Cyclin_C-dom"/>
</dbReference>
<dbReference type="InterPro" id="IPR006671">
    <property type="entry name" value="Cyclin_N"/>
</dbReference>
<dbReference type="InterPro" id="IPR048258">
    <property type="entry name" value="Cyclins_cyclin-box"/>
</dbReference>
<dbReference type="PANTHER" id="PTHR10177">
    <property type="entry name" value="CYCLINS"/>
    <property type="match status" value="1"/>
</dbReference>
<dbReference type="Pfam" id="PF02984">
    <property type="entry name" value="Cyclin_C"/>
    <property type="match status" value="1"/>
</dbReference>
<dbReference type="Pfam" id="PF00134">
    <property type="entry name" value="Cyclin_N"/>
    <property type="match status" value="1"/>
</dbReference>
<dbReference type="PIRSF" id="PIRSF001771">
    <property type="entry name" value="Cyclin_A_B_D_E"/>
    <property type="match status" value="1"/>
</dbReference>
<dbReference type="SMART" id="SM00385">
    <property type="entry name" value="CYCLIN"/>
    <property type="match status" value="2"/>
</dbReference>
<dbReference type="SMART" id="SM01332">
    <property type="entry name" value="Cyclin_C"/>
    <property type="match status" value="1"/>
</dbReference>
<dbReference type="SUPFAM" id="SSF47954">
    <property type="entry name" value="Cyclin-like"/>
    <property type="match status" value="2"/>
</dbReference>
<dbReference type="PROSITE" id="PS00292">
    <property type="entry name" value="CYCLINS"/>
    <property type="match status" value="1"/>
</dbReference>